<accession>Q63DX9</accession>
<keyword id="KW-0028">Amino-acid biosynthesis</keyword>
<keyword id="KW-0100">Branched-chain amino acid biosynthesis</keyword>
<keyword id="KW-0460">Magnesium</keyword>
<keyword id="KW-0479">Metal-binding</keyword>
<keyword id="KW-0521">NADP</keyword>
<keyword id="KW-0560">Oxidoreductase</keyword>
<feature type="chain" id="PRO_0000226155" description="Ketol-acid reductoisomerase (NADP(+)) 1">
    <location>
        <begin position="1"/>
        <end position="336"/>
    </location>
</feature>
<feature type="domain" description="KARI N-terminal Rossmann" evidence="2">
    <location>
        <begin position="2"/>
        <end position="181"/>
    </location>
</feature>
<feature type="domain" description="KARI C-terminal knotted" evidence="3">
    <location>
        <begin position="182"/>
        <end position="327"/>
    </location>
</feature>
<feature type="active site" evidence="1">
    <location>
        <position position="107"/>
    </location>
</feature>
<feature type="binding site" evidence="1">
    <location>
        <begin position="25"/>
        <end position="28"/>
    </location>
    <ligand>
        <name>NADP(+)</name>
        <dbReference type="ChEBI" id="CHEBI:58349"/>
    </ligand>
</feature>
<feature type="binding site" evidence="1">
    <location>
        <position position="48"/>
    </location>
    <ligand>
        <name>NADP(+)</name>
        <dbReference type="ChEBI" id="CHEBI:58349"/>
    </ligand>
</feature>
<feature type="binding site" evidence="1">
    <location>
        <position position="52"/>
    </location>
    <ligand>
        <name>NADP(+)</name>
        <dbReference type="ChEBI" id="CHEBI:58349"/>
    </ligand>
</feature>
<feature type="binding site" evidence="1">
    <location>
        <begin position="82"/>
        <end position="85"/>
    </location>
    <ligand>
        <name>NADP(+)</name>
        <dbReference type="ChEBI" id="CHEBI:58349"/>
    </ligand>
</feature>
<feature type="binding site" evidence="1">
    <location>
        <position position="133"/>
    </location>
    <ligand>
        <name>NADP(+)</name>
        <dbReference type="ChEBI" id="CHEBI:58349"/>
    </ligand>
</feature>
<feature type="binding site" evidence="1">
    <location>
        <position position="190"/>
    </location>
    <ligand>
        <name>Mg(2+)</name>
        <dbReference type="ChEBI" id="CHEBI:18420"/>
        <label>1</label>
    </ligand>
</feature>
<feature type="binding site" evidence="1">
    <location>
        <position position="190"/>
    </location>
    <ligand>
        <name>Mg(2+)</name>
        <dbReference type="ChEBI" id="CHEBI:18420"/>
        <label>2</label>
    </ligand>
</feature>
<feature type="binding site" evidence="1">
    <location>
        <position position="194"/>
    </location>
    <ligand>
        <name>Mg(2+)</name>
        <dbReference type="ChEBI" id="CHEBI:18420"/>
        <label>1</label>
    </ligand>
</feature>
<feature type="binding site" evidence="1">
    <location>
        <position position="226"/>
    </location>
    <ligand>
        <name>Mg(2+)</name>
        <dbReference type="ChEBI" id="CHEBI:18420"/>
        <label>2</label>
    </ligand>
</feature>
<feature type="binding site" evidence="1">
    <location>
        <position position="230"/>
    </location>
    <ligand>
        <name>Mg(2+)</name>
        <dbReference type="ChEBI" id="CHEBI:18420"/>
        <label>2</label>
    </ligand>
</feature>
<feature type="binding site" evidence="1">
    <location>
        <position position="251"/>
    </location>
    <ligand>
        <name>substrate</name>
    </ligand>
</feature>
<evidence type="ECO:0000255" key="1">
    <source>
        <dbReference type="HAMAP-Rule" id="MF_00435"/>
    </source>
</evidence>
<evidence type="ECO:0000255" key="2">
    <source>
        <dbReference type="PROSITE-ProRule" id="PRU01197"/>
    </source>
</evidence>
<evidence type="ECO:0000255" key="3">
    <source>
        <dbReference type="PROSITE-ProRule" id="PRU01198"/>
    </source>
</evidence>
<sequence length="336" mass="36651">MAKVYYEKDVTVNVLKEKKVAIIGYGSQGHAHAQNLRDNGFDVVVGLRKGKSWDKAKEDGFSVYTVAEAAKQADVVMILLPDELQPEVYEAEIAPNLQAGNSLVFAHGFNVHFDQVKPPANVDVFLVAPKGPGHLVRRTFSEGGAVPALFAVYQDATGVATEKALSYADGIGATRAGVLETTFKEETETDLFGEQAVLCGGVTALVKAGFETLVDAGYQPELAYFECLHELKLIVDLMYEGGLENMRYSVSDTAQWGDFVSGPRVVTEDTKKAMGAVLAEIQDGTFARGWIAEHKAGRPNFHATNEKENEHEIEVVGRKLREMMPFVQPRVKAGVK</sequence>
<gene>
    <name evidence="1" type="primary">ilvC1</name>
    <name type="ordered locus">BCE33L1284</name>
</gene>
<proteinExistence type="inferred from homology"/>
<dbReference type="EC" id="1.1.1.86" evidence="1"/>
<dbReference type="EMBL" id="CP000001">
    <property type="protein sequence ID" value="AAU18964.1"/>
    <property type="molecule type" value="Genomic_DNA"/>
</dbReference>
<dbReference type="SMR" id="Q63DX9"/>
<dbReference type="KEGG" id="bcz:BCE33L1284"/>
<dbReference type="PATRIC" id="fig|288681.22.peg.4270"/>
<dbReference type="UniPathway" id="UPA00047">
    <property type="reaction ID" value="UER00056"/>
</dbReference>
<dbReference type="UniPathway" id="UPA00049">
    <property type="reaction ID" value="UER00060"/>
</dbReference>
<dbReference type="Proteomes" id="UP000002612">
    <property type="component" value="Chromosome"/>
</dbReference>
<dbReference type="GO" id="GO:0005829">
    <property type="term" value="C:cytosol"/>
    <property type="evidence" value="ECO:0007669"/>
    <property type="project" value="TreeGrafter"/>
</dbReference>
<dbReference type="GO" id="GO:0004455">
    <property type="term" value="F:ketol-acid reductoisomerase activity"/>
    <property type="evidence" value="ECO:0007669"/>
    <property type="project" value="UniProtKB-UniRule"/>
</dbReference>
<dbReference type="GO" id="GO:0000287">
    <property type="term" value="F:magnesium ion binding"/>
    <property type="evidence" value="ECO:0007669"/>
    <property type="project" value="UniProtKB-UniRule"/>
</dbReference>
<dbReference type="GO" id="GO:0050661">
    <property type="term" value="F:NADP binding"/>
    <property type="evidence" value="ECO:0007669"/>
    <property type="project" value="InterPro"/>
</dbReference>
<dbReference type="GO" id="GO:0009097">
    <property type="term" value="P:isoleucine biosynthetic process"/>
    <property type="evidence" value="ECO:0007669"/>
    <property type="project" value="UniProtKB-UniRule"/>
</dbReference>
<dbReference type="GO" id="GO:0009099">
    <property type="term" value="P:L-valine biosynthetic process"/>
    <property type="evidence" value="ECO:0007669"/>
    <property type="project" value="UniProtKB-UniRule"/>
</dbReference>
<dbReference type="FunFam" id="3.40.50.720:FF:000023">
    <property type="entry name" value="Ketol-acid reductoisomerase (NADP(+))"/>
    <property type="match status" value="1"/>
</dbReference>
<dbReference type="Gene3D" id="6.10.240.10">
    <property type="match status" value="1"/>
</dbReference>
<dbReference type="Gene3D" id="3.40.50.720">
    <property type="entry name" value="NAD(P)-binding Rossmann-like Domain"/>
    <property type="match status" value="1"/>
</dbReference>
<dbReference type="HAMAP" id="MF_00435">
    <property type="entry name" value="IlvC"/>
    <property type="match status" value="1"/>
</dbReference>
<dbReference type="InterPro" id="IPR008927">
    <property type="entry name" value="6-PGluconate_DH-like_C_sf"/>
</dbReference>
<dbReference type="InterPro" id="IPR013023">
    <property type="entry name" value="KARI"/>
</dbReference>
<dbReference type="InterPro" id="IPR000506">
    <property type="entry name" value="KARI_C"/>
</dbReference>
<dbReference type="InterPro" id="IPR013116">
    <property type="entry name" value="KARI_N"/>
</dbReference>
<dbReference type="InterPro" id="IPR014359">
    <property type="entry name" value="KARI_prok"/>
</dbReference>
<dbReference type="InterPro" id="IPR036291">
    <property type="entry name" value="NAD(P)-bd_dom_sf"/>
</dbReference>
<dbReference type="NCBIfam" id="TIGR00465">
    <property type="entry name" value="ilvC"/>
    <property type="match status" value="1"/>
</dbReference>
<dbReference type="NCBIfam" id="NF004017">
    <property type="entry name" value="PRK05479.1"/>
    <property type="match status" value="1"/>
</dbReference>
<dbReference type="NCBIfam" id="NF009940">
    <property type="entry name" value="PRK13403.1"/>
    <property type="match status" value="1"/>
</dbReference>
<dbReference type="PANTHER" id="PTHR21371">
    <property type="entry name" value="KETOL-ACID REDUCTOISOMERASE, MITOCHONDRIAL"/>
    <property type="match status" value="1"/>
</dbReference>
<dbReference type="PANTHER" id="PTHR21371:SF1">
    <property type="entry name" value="KETOL-ACID REDUCTOISOMERASE, MITOCHONDRIAL"/>
    <property type="match status" value="1"/>
</dbReference>
<dbReference type="Pfam" id="PF01450">
    <property type="entry name" value="KARI_C"/>
    <property type="match status" value="1"/>
</dbReference>
<dbReference type="Pfam" id="PF07991">
    <property type="entry name" value="KARI_N"/>
    <property type="match status" value="1"/>
</dbReference>
<dbReference type="PIRSF" id="PIRSF000116">
    <property type="entry name" value="IlvC_gammaproteo"/>
    <property type="match status" value="1"/>
</dbReference>
<dbReference type="SUPFAM" id="SSF48179">
    <property type="entry name" value="6-phosphogluconate dehydrogenase C-terminal domain-like"/>
    <property type="match status" value="1"/>
</dbReference>
<dbReference type="SUPFAM" id="SSF51735">
    <property type="entry name" value="NAD(P)-binding Rossmann-fold domains"/>
    <property type="match status" value="1"/>
</dbReference>
<dbReference type="PROSITE" id="PS51851">
    <property type="entry name" value="KARI_C"/>
    <property type="match status" value="1"/>
</dbReference>
<dbReference type="PROSITE" id="PS51850">
    <property type="entry name" value="KARI_N"/>
    <property type="match status" value="1"/>
</dbReference>
<protein>
    <recommendedName>
        <fullName evidence="1">Ketol-acid reductoisomerase (NADP(+)) 1</fullName>
        <shortName evidence="1">KARI 1</shortName>
        <ecNumber evidence="1">1.1.1.86</ecNumber>
    </recommendedName>
    <alternativeName>
        <fullName evidence="1">Acetohydroxy-acid isomeroreductase 1</fullName>
        <shortName evidence="1">AHIR 1</shortName>
    </alternativeName>
    <alternativeName>
        <fullName evidence="1">Alpha-keto-beta-hydroxylacyl reductoisomerase 1</fullName>
    </alternativeName>
    <alternativeName>
        <fullName evidence="1">Ketol-acid reductoisomerase type 1</fullName>
    </alternativeName>
    <alternativeName>
        <fullName evidence="1">Ketol-acid reductoisomerase type I</fullName>
    </alternativeName>
</protein>
<name>ILVC1_BACCZ</name>
<reference key="1">
    <citation type="journal article" date="2006" name="J. Bacteriol.">
        <title>Pathogenomic sequence analysis of Bacillus cereus and Bacillus thuringiensis isolates closely related to Bacillus anthracis.</title>
        <authorList>
            <person name="Han C.S."/>
            <person name="Xie G."/>
            <person name="Challacombe J.F."/>
            <person name="Altherr M.R."/>
            <person name="Bhotika S.S."/>
            <person name="Bruce D."/>
            <person name="Campbell C.S."/>
            <person name="Campbell M.L."/>
            <person name="Chen J."/>
            <person name="Chertkov O."/>
            <person name="Cleland C."/>
            <person name="Dimitrijevic M."/>
            <person name="Doggett N.A."/>
            <person name="Fawcett J.J."/>
            <person name="Glavina T."/>
            <person name="Goodwin L.A."/>
            <person name="Hill K.K."/>
            <person name="Hitchcock P."/>
            <person name="Jackson P.J."/>
            <person name="Keim P."/>
            <person name="Kewalramani A.R."/>
            <person name="Longmire J."/>
            <person name="Lucas S."/>
            <person name="Malfatti S."/>
            <person name="McMurry K."/>
            <person name="Meincke L.J."/>
            <person name="Misra M."/>
            <person name="Moseman B.L."/>
            <person name="Mundt M."/>
            <person name="Munk A.C."/>
            <person name="Okinaka R.T."/>
            <person name="Parson-Quintana B."/>
            <person name="Reilly L.P."/>
            <person name="Richardson P."/>
            <person name="Robinson D.L."/>
            <person name="Rubin E."/>
            <person name="Saunders E."/>
            <person name="Tapia R."/>
            <person name="Tesmer J.G."/>
            <person name="Thayer N."/>
            <person name="Thompson L.S."/>
            <person name="Tice H."/>
            <person name="Ticknor L.O."/>
            <person name="Wills P.L."/>
            <person name="Brettin T.S."/>
            <person name="Gilna P."/>
        </authorList>
    </citation>
    <scope>NUCLEOTIDE SEQUENCE [LARGE SCALE GENOMIC DNA]</scope>
    <source>
        <strain>ZK / E33L</strain>
    </source>
</reference>
<organism>
    <name type="scientific">Bacillus cereus (strain ZK / E33L)</name>
    <dbReference type="NCBI Taxonomy" id="288681"/>
    <lineage>
        <taxon>Bacteria</taxon>
        <taxon>Bacillati</taxon>
        <taxon>Bacillota</taxon>
        <taxon>Bacilli</taxon>
        <taxon>Bacillales</taxon>
        <taxon>Bacillaceae</taxon>
        <taxon>Bacillus</taxon>
        <taxon>Bacillus cereus group</taxon>
    </lineage>
</organism>
<comment type="function">
    <text evidence="1">Involved in the biosynthesis of branched-chain amino acids (BCAA). Catalyzes an alkyl-migration followed by a ketol-acid reduction of (S)-2-acetolactate (S2AL) to yield (R)-2,3-dihydroxy-isovalerate. In the isomerase reaction, S2AL is rearranged via a Mg-dependent methyl migration to produce 3-hydroxy-3-methyl-2-ketobutyrate (HMKB). In the reductase reaction, this 2-ketoacid undergoes a metal-dependent reduction by NADPH to yield (R)-2,3-dihydroxy-isovalerate.</text>
</comment>
<comment type="catalytic activity">
    <reaction evidence="1">
        <text>(2R)-2,3-dihydroxy-3-methylbutanoate + NADP(+) = (2S)-2-acetolactate + NADPH + H(+)</text>
        <dbReference type="Rhea" id="RHEA:22068"/>
        <dbReference type="ChEBI" id="CHEBI:15378"/>
        <dbReference type="ChEBI" id="CHEBI:49072"/>
        <dbReference type="ChEBI" id="CHEBI:57783"/>
        <dbReference type="ChEBI" id="CHEBI:58349"/>
        <dbReference type="ChEBI" id="CHEBI:58476"/>
        <dbReference type="EC" id="1.1.1.86"/>
    </reaction>
</comment>
<comment type="catalytic activity">
    <reaction evidence="1">
        <text>(2R,3R)-2,3-dihydroxy-3-methylpentanoate + NADP(+) = (S)-2-ethyl-2-hydroxy-3-oxobutanoate + NADPH + H(+)</text>
        <dbReference type="Rhea" id="RHEA:13493"/>
        <dbReference type="ChEBI" id="CHEBI:15378"/>
        <dbReference type="ChEBI" id="CHEBI:49256"/>
        <dbReference type="ChEBI" id="CHEBI:49258"/>
        <dbReference type="ChEBI" id="CHEBI:57783"/>
        <dbReference type="ChEBI" id="CHEBI:58349"/>
        <dbReference type="EC" id="1.1.1.86"/>
    </reaction>
</comment>
<comment type="cofactor">
    <cofactor evidence="1">
        <name>Mg(2+)</name>
        <dbReference type="ChEBI" id="CHEBI:18420"/>
    </cofactor>
    <text evidence="1">Binds 2 magnesium ions per subunit.</text>
</comment>
<comment type="pathway">
    <text evidence="1">Amino-acid biosynthesis; L-isoleucine biosynthesis; L-isoleucine from 2-oxobutanoate: step 2/4.</text>
</comment>
<comment type="pathway">
    <text evidence="1">Amino-acid biosynthesis; L-valine biosynthesis; L-valine from pyruvate: step 2/4.</text>
</comment>
<comment type="similarity">
    <text evidence="1">Belongs to the ketol-acid reductoisomerase family.</text>
</comment>